<gene>
    <name evidence="1" type="primary">nuoH</name>
    <name type="ordered locus">NT01EI_2673</name>
</gene>
<organism>
    <name type="scientific">Edwardsiella ictaluri (strain 93-146)</name>
    <dbReference type="NCBI Taxonomy" id="634503"/>
    <lineage>
        <taxon>Bacteria</taxon>
        <taxon>Pseudomonadati</taxon>
        <taxon>Pseudomonadota</taxon>
        <taxon>Gammaproteobacteria</taxon>
        <taxon>Enterobacterales</taxon>
        <taxon>Hafniaceae</taxon>
        <taxon>Edwardsiella</taxon>
    </lineage>
</organism>
<reference key="1">
    <citation type="submission" date="2009-03" db="EMBL/GenBank/DDBJ databases">
        <title>Complete genome sequence of Edwardsiella ictaluri 93-146.</title>
        <authorList>
            <person name="Williams M.L."/>
            <person name="Gillaspy A.F."/>
            <person name="Dyer D.W."/>
            <person name="Thune R.L."/>
            <person name="Waldbieser G.C."/>
            <person name="Schuster S.C."/>
            <person name="Gipson J."/>
            <person name="Zaitshik J."/>
            <person name="Landry C."/>
            <person name="Lawrence M.L."/>
        </authorList>
    </citation>
    <scope>NUCLEOTIDE SEQUENCE [LARGE SCALE GENOMIC DNA]</scope>
    <source>
        <strain>93-146</strain>
    </source>
</reference>
<sequence length="325" mass="36168">MSVITPDTVEILLTVLKAVVILLVVVTCGAFMSFGERRLLGLFQNRYGPSRVGWGGSLQLVADMIKMFFKEDWVPPFTDRLIFTLAPMIAFCSLLLSFAIVPVAPGWMGADLNIGILFFLMMAGLAVYAVLFAGWSSNNKYSLLGAMRASAQTLSYEVFLGLSLMGVVAQAGSFNMQVIVDSQTHLWNIIPQFFGFLTFIIAGVAVCHRHPFDQPEAEQELADGYHIEYSGMKFGLFFVGEYIGIVTISALIVTLFFGGWHGPWLPPFIWFAIKTAFFMVMFILVRASLPRPRYDQVMAFGWRICLPLTLINLLVTAAVILYHAQ</sequence>
<proteinExistence type="inferred from homology"/>
<evidence type="ECO:0000255" key="1">
    <source>
        <dbReference type="HAMAP-Rule" id="MF_01350"/>
    </source>
</evidence>
<feature type="chain" id="PRO_1000214840" description="NADH-quinone oxidoreductase subunit H">
    <location>
        <begin position="1"/>
        <end position="325"/>
    </location>
</feature>
<feature type="transmembrane region" description="Helical" evidence="1">
    <location>
        <begin position="11"/>
        <end position="31"/>
    </location>
</feature>
<feature type="transmembrane region" description="Helical" evidence="1">
    <location>
        <begin position="50"/>
        <end position="69"/>
    </location>
</feature>
<feature type="transmembrane region" description="Helical" evidence="1">
    <location>
        <begin position="81"/>
        <end position="101"/>
    </location>
</feature>
<feature type="transmembrane region" description="Helical" evidence="1">
    <location>
        <begin position="114"/>
        <end position="134"/>
    </location>
</feature>
<feature type="transmembrane region" description="Helical" evidence="1">
    <location>
        <begin position="154"/>
        <end position="174"/>
    </location>
</feature>
<feature type="transmembrane region" description="Helical" evidence="1">
    <location>
        <begin position="186"/>
        <end position="206"/>
    </location>
</feature>
<feature type="transmembrane region" description="Helical" evidence="1">
    <location>
        <begin position="237"/>
        <end position="257"/>
    </location>
</feature>
<feature type="transmembrane region" description="Helical" evidence="1">
    <location>
        <begin position="265"/>
        <end position="285"/>
    </location>
</feature>
<feature type="transmembrane region" description="Helical" evidence="1">
    <location>
        <begin position="304"/>
        <end position="324"/>
    </location>
</feature>
<protein>
    <recommendedName>
        <fullName evidence="1">NADH-quinone oxidoreductase subunit H</fullName>
        <ecNumber evidence="1">7.1.1.-</ecNumber>
    </recommendedName>
    <alternativeName>
        <fullName evidence="1">NADH dehydrogenase I subunit H</fullName>
    </alternativeName>
    <alternativeName>
        <fullName evidence="1">NDH-1 subunit H</fullName>
    </alternativeName>
</protein>
<accession>C5B8I0</accession>
<comment type="function">
    <text evidence="1">NDH-1 shuttles electrons from NADH, via FMN and iron-sulfur (Fe-S) centers, to quinones in the respiratory chain. The immediate electron acceptor for the enzyme in this species is believed to be ubiquinone. Couples the redox reaction to proton translocation (for every two electrons transferred, four hydrogen ions are translocated across the cytoplasmic membrane), and thus conserves the redox energy in a proton gradient. This subunit may bind ubiquinone.</text>
</comment>
<comment type="catalytic activity">
    <reaction evidence="1">
        <text>a quinone + NADH + 5 H(+)(in) = a quinol + NAD(+) + 4 H(+)(out)</text>
        <dbReference type="Rhea" id="RHEA:57888"/>
        <dbReference type="ChEBI" id="CHEBI:15378"/>
        <dbReference type="ChEBI" id="CHEBI:24646"/>
        <dbReference type="ChEBI" id="CHEBI:57540"/>
        <dbReference type="ChEBI" id="CHEBI:57945"/>
        <dbReference type="ChEBI" id="CHEBI:132124"/>
    </reaction>
</comment>
<comment type="subunit">
    <text evidence="1">NDH-1 is composed of 13 different subunits. Subunits NuoA, H, J, K, L, M, N constitute the membrane sector of the complex.</text>
</comment>
<comment type="subcellular location">
    <subcellularLocation>
        <location evidence="1">Cell inner membrane</location>
        <topology evidence="1">Multi-pass membrane protein</topology>
    </subcellularLocation>
</comment>
<comment type="similarity">
    <text evidence="1">Belongs to the complex I subunit 1 family.</text>
</comment>
<dbReference type="EC" id="7.1.1.-" evidence="1"/>
<dbReference type="EMBL" id="CP001600">
    <property type="protein sequence ID" value="ACR69841.1"/>
    <property type="molecule type" value="Genomic_DNA"/>
</dbReference>
<dbReference type="RefSeq" id="WP_015871946.1">
    <property type="nucleotide sequence ID" value="NZ_CP169062.1"/>
</dbReference>
<dbReference type="SMR" id="C5B8I0"/>
<dbReference type="STRING" id="67780.B6E78_05365"/>
<dbReference type="GeneID" id="69539570"/>
<dbReference type="KEGG" id="eic:NT01EI_2673"/>
<dbReference type="PATRIC" id="fig|634503.3.peg.2388"/>
<dbReference type="HOGENOM" id="CLU_015134_0_1_6"/>
<dbReference type="OrthoDB" id="9803734at2"/>
<dbReference type="Proteomes" id="UP000001485">
    <property type="component" value="Chromosome"/>
</dbReference>
<dbReference type="GO" id="GO:0005886">
    <property type="term" value="C:plasma membrane"/>
    <property type="evidence" value="ECO:0007669"/>
    <property type="project" value="UniProtKB-SubCell"/>
</dbReference>
<dbReference type="GO" id="GO:0003954">
    <property type="term" value="F:NADH dehydrogenase activity"/>
    <property type="evidence" value="ECO:0007669"/>
    <property type="project" value="TreeGrafter"/>
</dbReference>
<dbReference type="GO" id="GO:0016655">
    <property type="term" value="F:oxidoreductase activity, acting on NAD(P)H, quinone or similar compound as acceptor"/>
    <property type="evidence" value="ECO:0007669"/>
    <property type="project" value="UniProtKB-UniRule"/>
</dbReference>
<dbReference type="GO" id="GO:0048038">
    <property type="term" value="F:quinone binding"/>
    <property type="evidence" value="ECO:0007669"/>
    <property type="project" value="UniProtKB-KW"/>
</dbReference>
<dbReference type="GO" id="GO:0009060">
    <property type="term" value="P:aerobic respiration"/>
    <property type="evidence" value="ECO:0007669"/>
    <property type="project" value="TreeGrafter"/>
</dbReference>
<dbReference type="HAMAP" id="MF_01350">
    <property type="entry name" value="NDH1_NuoH"/>
    <property type="match status" value="1"/>
</dbReference>
<dbReference type="InterPro" id="IPR001694">
    <property type="entry name" value="NADH_UbQ_OxRdtase_su1/FPO"/>
</dbReference>
<dbReference type="InterPro" id="IPR018086">
    <property type="entry name" value="NADH_UbQ_OxRdtase_su1_CS"/>
</dbReference>
<dbReference type="NCBIfam" id="NF004740">
    <property type="entry name" value="PRK06076.1-1"/>
    <property type="match status" value="1"/>
</dbReference>
<dbReference type="NCBIfam" id="NF004741">
    <property type="entry name" value="PRK06076.1-2"/>
    <property type="match status" value="1"/>
</dbReference>
<dbReference type="PANTHER" id="PTHR11432">
    <property type="entry name" value="NADH DEHYDROGENASE SUBUNIT 1"/>
    <property type="match status" value="1"/>
</dbReference>
<dbReference type="PANTHER" id="PTHR11432:SF3">
    <property type="entry name" value="NADH-UBIQUINONE OXIDOREDUCTASE CHAIN 1"/>
    <property type="match status" value="1"/>
</dbReference>
<dbReference type="Pfam" id="PF00146">
    <property type="entry name" value="NADHdh"/>
    <property type="match status" value="1"/>
</dbReference>
<dbReference type="PROSITE" id="PS00667">
    <property type="entry name" value="COMPLEX1_ND1_1"/>
    <property type="match status" value="1"/>
</dbReference>
<dbReference type="PROSITE" id="PS00668">
    <property type="entry name" value="COMPLEX1_ND1_2"/>
    <property type="match status" value="1"/>
</dbReference>
<name>NUOH_EDWI9</name>
<keyword id="KW-0997">Cell inner membrane</keyword>
<keyword id="KW-1003">Cell membrane</keyword>
<keyword id="KW-0472">Membrane</keyword>
<keyword id="KW-0520">NAD</keyword>
<keyword id="KW-0874">Quinone</keyword>
<keyword id="KW-1278">Translocase</keyword>
<keyword id="KW-0812">Transmembrane</keyword>
<keyword id="KW-1133">Transmembrane helix</keyword>
<keyword id="KW-0830">Ubiquinone</keyword>